<accession>Q1IEA0</accession>
<proteinExistence type="inferred from homology"/>
<protein>
    <recommendedName>
        <fullName evidence="1">UDP-N-acetylglucosamine 1-carboxyvinyltransferase</fullName>
        <ecNumber evidence="1">2.5.1.7</ecNumber>
    </recommendedName>
    <alternativeName>
        <fullName evidence="1">Enoylpyruvate transferase</fullName>
    </alternativeName>
    <alternativeName>
        <fullName evidence="1">UDP-N-acetylglucosamine enolpyruvyl transferase</fullName>
        <shortName evidence="1">EPT</shortName>
    </alternativeName>
</protein>
<feature type="chain" id="PRO_1000023073" description="UDP-N-acetylglucosamine 1-carboxyvinyltransferase">
    <location>
        <begin position="1"/>
        <end position="421"/>
    </location>
</feature>
<feature type="active site" description="Proton donor" evidence="1">
    <location>
        <position position="117"/>
    </location>
</feature>
<feature type="binding site" evidence="1">
    <location>
        <begin position="22"/>
        <end position="23"/>
    </location>
    <ligand>
        <name>phosphoenolpyruvate</name>
        <dbReference type="ChEBI" id="CHEBI:58702"/>
    </ligand>
</feature>
<feature type="binding site" evidence="1">
    <location>
        <position position="93"/>
    </location>
    <ligand>
        <name>UDP-N-acetyl-alpha-D-glucosamine</name>
        <dbReference type="ChEBI" id="CHEBI:57705"/>
    </ligand>
</feature>
<feature type="binding site" evidence="1">
    <location>
        <begin position="122"/>
        <end position="126"/>
    </location>
    <ligand>
        <name>UDP-N-acetyl-alpha-D-glucosamine</name>
        <dbReference type="ChEBI" id="CHEBI:57705"/>
    </ligand>
</feature>
<feature type="binding site" evidence="1">
    <location>
        <position position="308"/>
    </location>
    <ligand>
        <name>UDP-N-acetyl-alpha-D-glucosamine</name>
        <dbReference type="ChEBI" id="CHEBI:57705"/>
    </ligand>
</feature>
<feature type="binding site" evidence="1">
    <location>
        <position position="330"/>
    </location>
    <ligand>
        <name>UDP-N-acetyl-alpha-D-glucosamine</name>
        <dbReference type="ChEBI" id="CHEBI:57705"/>
    </ligand>
</feature>
<feature type="modified residue" description="2-(S-cysteinyl)pyruvic acid O-phosphothioketal" evidence="1">
    <location>
        <position position="117"/>
    </location>
</feature>
<name>MURA_PSEE4</name>
<evidence type="ECO:0000255" key="1">
    <source>
        <dbReference type="HAMAP-Rule" id="MF_00111"/>
    </source>
</evidence>
<reference key="1">
    <citation type="journal article" date="2006" name="Nat. Biotechnol.">
        <title>Complete genome sequence of the entomopathogenic and metabolically versatile soil bacterium Pseudomonas entomophila.</title>
        <authorList>
            <person name="Vodovar N."/>
            <person name="Vallenet D."/>
            <person name="Cruveiller S."/>
            <person name="Rouy Z."/>
            <person name="Barbe V."/>
            <person name="Acosta C."/>
            <person name="Cattolico L."/>
            <person name="Jubin C."/>
            <person name="Lajus A."/>
            <person name="Segurens B."/>
            <person name="Vacherie B."/>
            <person name="Wincker P."/>
            <person name="Weissenbach J."/>
            <person name="Lemaitre B."/>
            <person name="Medigue C."/>
            <person name="Boccard F."/>
        </authorList>
    </citation>
    <scope>NUCLEOTIDE SEQUENCE [LARGE SCALE GENOMIC DNA]</scope>
    <source>
        <strain>L48</strain>
    </source>
</reference>
<comment type="function">
    <text evidence="1">Cell wall formation. Adds enolpyruvyl to UDP-N-acetylglucosamine.</text>
</comment>
<comment type="catalytic activity">
    <reaction evidence="1">
        <text>phosphoenolpyruvate + UDP-N-acetyl-alpha-D-glucosamine = UDP-N-acetyl-3-O-(1-carboxyvinyl)-alpha-D-glucosamine + phosphate</text>
        <dbReference type="Rhea" id="RHEA:18681"/>
        <dbReference type="ChEBI" id="CHEBI:43474"/>
        <dbReference type="ChEBI" id="CHEBI:57705"/>
        <dbReference type="ChEBI" id="CHEBI:58702"/>
        <dbReference type="ChEBI" id="CHEBI:68483"/>
        <dbReference type="EC" id="2.5.1.7"/>
    </reaction>
</comment>
<comment type="pathway">
    <text evidence="1">Cell wall biogenesis; peptidoglycan biosynthesis.</text>
</comment>
<comment type="subcellular location">
    <subcellularLocation>
        <location evidence="1">Cytoplasm</location>
    </subcellularLocation>
</comment>
<comment type="similarity">
    <text evidence="1">Belongs to the EPSP synthase family. MurA subfamily.</text>
</comment>
<gene>
    <name evidence="1" type="primary">murA</name>
    <name type="ordered locus">PSEEN1105</name>
</gene>
<dbReference type="EC" id="2.5.1.7" evidence="1"/>
<dbReference type="EMBL" id="CT573326">
    <property type="protein sequence ID" value="CAK14005.1"/>
    <property type="molecule type" value="Genomic_DNA"/>
</dbReference>
<dbReference type="RefSeq" id="WP_011532428.1">
    <property type="nucleotide sequence ID" value="NC_008027.1"/>
</dbReference>
<dbReference type="SMR" id="Q1IEA0"/>
<dbReference type="STRING" id="384676.PSEEN1105"/>
<dbReference type="GeneID" id="32804396"/>
<dbReference type="KEGG" id="pen:PSEEN1105"/>
<dbReference type="eggNOG" id="COG0766">
    <property type="taxonomic scope" value="Bacteria"/>
</dbReference>
<dbReference type="HOGENOM" id="CLU_027387_0_0_6"/>
<dbReference type="OrthoDB" id="9803760at2"/>
<dbReference type="UniPathway" id="UPA00219"/>
<dbReference type="Proteomes" id="UP000000658">
    <property type="component" value="Chromosome"/>
</dbReference>
<dbReference type="GO" id="GO:0005737">
    <property type="term" value="C:cytoplasm"/>
    <property type="evidence" value="ECO:0007669"/>
    <property type="project" value="UniProtKB-SubCell"/>
</dbReference>
<dbReference type="GO" id="GO:0008760">
    <property type="term" value="F:UDP-N-acetylglucosamine 1-carboxyvinyltransferase activity"/>
    <property type="evidence" value="ECO:0007669"/>
    <property type="project" value="UniProtKB-UniRule"/>
</dbReference>
<dbReference type="GO" id="GO:0051301">
    <property type="term" value="P:cell division"/>
    <property type="evidence" value="ECO:0007669"/>
    <property type="project" value="UniProtKB-KW"/>
</dbReference>
<dbReference type="GO" id="GO:0071555">
    <property type="term" value="P:cell wall organization"/>
    <property type="evidence" value="ECO:0007669"/>
    <property type="project" value="UniProtKB-KW"/>
</dbReference>
<dbReference type="GO" id="GO:0009252">
    <property type="term" value="P:peptidoglycan biosynthetic process"/>
    <property type="evidence" value="ECO:0007669"/>
    <property type="project" value="UniProtKB-UniRule"/>
</dbReference>
<dbReference type="GO" id="GO:0008360">
    <property type="term" value="P:regulation of cell shape"/>
    <property type="evidence" value="ECO:0007669"/>
    <property type="project" value="UniProtKB-KW"/>
</dbReference>
<dbReference type="GO" id="GO:0019277">
    <property type="term" value="P:UDP-N-acetylgalactosamine biosynthetic process"/>
    <property type="evidence" value="ECO:0007669"/>
    <property type="project" value="InterPro"/>
</dbReference>
<dbReference type="CDD" id="cd01555">
    <property type="entry name" value="UdpNAET"/>
    <property type="match status" value="1"/>
</dbReference>
<dbReference type="FunFam" id="3.65.10.10:FF:000002">
    <property type="entry name" value="UDP-N-acetylglucosamine 1-carboxyvinyltransferase"/>
    <property type="match status" value="1"/>
</dbReference>
<dbReference type="Gene3D" id="3.65.10.10">
    <property type="entry name" value="Enolpyruvate transferase domain"/>
    <property type="match status" value="2"/>
</dbReference>
<dbReference type="HAMAP" id="MF_00111">
    <property type="entry name" value="MurA"/>
    <property type="match status" value="1"/>
</dbReference>
<dbReference type="InterPro" id="IPR001986">
    <property type="entry name" value="Enolpyruvate_Tfrase_dom"/>
</dbReference>
<dbReference type="InterPro" id="IPR036968">
    <property type="entry name" value="Enolpyruvate_Tfrase_sf"/>
</dbReference>
<dbReference type="InterPro" id="IPR050068">
    <property type="entry name" value="MurA_subfamily"/>
</dbReference>
<dbReference type="InterPro" id="IPR013792">
    <property type="entry name" value="RNA3'P_cycl/enolpyr_Trfase_a/b"/>
</dbReference>
<dbReference type="InterPro" id="IPR005750">
    <property type="entry name" value="UDP_GlcNAc_COvinyl_MurA"/>
</dbReference>
<dbReference type="NCBIfam" id="TIGR01072">
    <property type="entry name" value="murA"/>
    <property type="match status" value="1"/>
</dbReference>
<dbReference type="NCBIfam" id="NF006873">
    <property type="entry name" value="PRK09369.1"/>
    <property type="match status" value="1"/>
</dbReference>
<dbReference type="PANTHER" id="PTHR43783">
    <property type="entry name" value="UDP-N-ACETYLGLUCOSAMINE 1-CARBOXYVINYLTRANSFERASE"/>
    <property type="match status" value="1"/>
</dbReference>
<dbReference type="PANTHER" id="PTHR43783:SF1">
    <property type="entry name" value="UDP-N-ACETYLGLUCOSAMINE 1-CARBOXYVINYLTRANSFERASE"/>
    <property type="match status" value="1"/>
</dbReference>
<dbReference type="Pfam" id="PF00275">
    <property type="entry name" value="EPSP_synthase"/>
    <property type="match status" value="1"/>
</dbReference>
<dbReference type="SUPFAM" id="SSF55205">
    <property type="entry name" value="EPT/RTPC-like"/>
    <property type="match status" value="1"/>
</dbReference>
<organism>
    <name type="scientific">Pseudomonas entomophila (strain L48)</name>
    <dbReference type="NCBI Taxonomy" id="384676"/>
    <lineage>
        <taxon>Bacteria</taxon>
        <taxon>Pseudomonadati</taxon>
        <taxon>Pseudomonadota</taxon>
        <taxon>Gammaproteobacteria</taxon>
        <taxon>Pseudomonadales</taxon>
        <taxon>Pseudomonadaceae</taxon>
        <taxon>Pseudomonas</taxon>
    </lineage>
</organism>
<sequence>MDKLIITGGPRLDGEIRISGAKNAALPILAATLLADGPVTVGNLPHLHDITTMIELFGRMGIEPVIDEKLAVEIDPRTIKTLVAPYELVKTMRASILVLGPMVARFGEAEVALPGGCAIGSRPVDLHIRGLEAMGAKIEVEGGYIKAKAPEGGLRGAHFFFDTVSVTGTENIMMAAALAKGRSVLQNAAREPEVVDLANFINAMGGKVQGAGTDTITIDGVERLASATYRVMPDRIETGTYLVAAAVTGGRVKVKDTDPTILEAVLEKLKEAGADITTGEDWIELDMHGKRPKAVNLRTAPYPAFPTDMQAQFISLNAIAEGTGAVIETIFENRFMHVYEMHRMGAQIQVEGNTAIVTGVKALKGAPVMATDLRASASLVLSALVAEGDTLIDRIYHIDRGYECIEEKLQMLGAKIRRVPG</sequence>
<keyword id="KW-0131">Cell cycle</keyword>
<keyword id="KW-0132">Cell division</keyword>
<keyword id="KW-0133">Cell shape</keyword>
<keyword id="KW-0961">Cell wall biogenesis/degradation</keyword>
<keyword id="KW-0963">Cytoplasm</keyword>
<keyword id="KW-0573">Peptidoglycan synthesis</keyword>
<keyword id="KW-0670">Pyruvate</keyword>
<keyword id="KW-0808">Transferase</keyword>